<evidence type="ECO:0000250" key="1"/>
<evidence type="ECO:0000255" key="2">
    <source>
        <dbReference type="HAMAP-Rule" id="MF_00118"/>
    </source>
</evidence>
<feature type="chain" id="PRO_1000201376" description="Elongation factor Tu">
    <location>
        <begin position="1"/>
        <end position="400"/>
    </location>
</feature>
<feature type="domain" description="tr-type G">
    <location>
        <begin position="10"/>
        <end position="209"/>
    </location>
</feature>
<feature type="region of interest" description="G1" evidence="1">
    <location>
        <begin position="19"/>
        <end position="26"/>
    </location>
</feature>
<feature type="region of interest" description="G2" evidence="1">
    <location>
        <begin position="60"/>
        <end position="64"/>
    </location>
</feature>
<feature type="region of interest" description="G3" evidence="1">
    <location>
        <begin position="81"/>
        <end position="84"/>
    </location>
</feature>
<feature type="region of interest" description="G4" evidence="1">
    <location>
        <begin position="136"/>
        <end position="139"/>
    </location>
</feature>
<feature type="region of interest" description="G5" evidence="1">
    <location>
        <begin position="174"/>
        <end position="176"/>
    </location>
</feature>
<feature type="binding site" evidence="2">
    <location>
        <begin position="19"/>
        <end position="26"/>
    </location>
    <ligand>
        <name>GTP</name>
        <dbReference type="ChEBI" id="CHEBI:37565"/>
    </ligand>
</feature>
<feature type="binding site" evidence="2">
    <location>
        <position position="26"/>
    </location>
    <ligand>
        <name>Mg(2+)</name>
        <dbReference type="ChEBI" id="CHEBI:18420"/>
    </ligand>
</feature>
<feature type="binding site" evidence="2">
    <location>
        <begin position="81"/>
        <end position="85"/>
    </location>
    <ligand>
        <name>GTP</name>
        <dbReference type="ChEBI" id="CHEBI:37565"/>
    </ligand>
</feature>
<feature type="binding site" evidence="2">
    <location>
        <begin position="136"/>
        <end position="139"/>
    </location>
    <ligand>
        <name>GTP</name>
        <dbReference type="ChEBI" id="CHEBI:37565"/>
    </ligand>
</feature>
<reference key="1">
    <citation type="submission" date="2009-01" db="EMBL/GenBank/DDBJ databases">
        <title>Complete sequence of chromosome of Caldicellulosiruptor becscii DSM 6725.</title>
        <authorList>
            <person name="Lucas S."/>
            <person name="Copeland A."/>
            <person name="Lapidus A."/>
            <person name="Glavina del Rio T."/>
            <person name="Tice H."/>
            <person name="Bruce D."/>
            <person name="Goodwin L."/>
            <person name="Pitluck S."/>
            <person name="Sims D."/>
            <person name="Meincke L."/>
            <person name="Brettin T."/>
            <person name="Detter J.C."/>
            <person name="Han C."/>
            <person name="Larimer F."/>
            <person name="Land M."/>
            <person name="Hauser L."/>
            <person name="Kyrpides N."/>
            <person name="Ovchinnikova G."/>
            <person name="Kataeva I."/>
            <person name="Adams M.W.W."/>
        </authorList>
    </citation>
    <scope>NUCLEOTIDE SEQUENCE [LARGE SCALE GENOMIC DNA]</scope>
    <source>
        <strain>ATCC BAA-1888 / DSM 6725 / KCTC 15123 / Z-1320</strain>
    </source>
</reference>
<proteinExistence type="inferred from homology"/>
<gene>
    <name evidence="2" type="primary">tuf</name>
    <name type="ordered locus">Athe_0810</name>
</gene>
<accession>B9MQH1</accession>
<protein>
    <recommendedName>
        <fullName evidence="2">Elongation factor Tu</fullName>
        <shortName evidence="2">EF-Tu</shortName>
        <ecNumber evidence="2">3.6.5.3</ecNumber>
    </recommendedName>
</protein>
<name>EFTU_CALBD</name>
<comment type="function">
    <text evidence="2">GTP hydrolase that promotes the GTP-dependent binding of aminoacyl-tRNA to the A-site of ribosomes during protein biosynthesis.</text>
</comment>
<comment type="catalytic activity">
    <reaction evidence="2">
        <text>GTP + H2O = GDP + phosphate + H(+)</text>
        <dbReference type="Rhea" id="RHEA:19669"/>
        <dbReference type="ChEBI" id="CHEBI:15377"/>
        <dbReference type="ChEBI" id="CHEBI:15378"/>
        <dbReference type="ChEBI" id="CHEBI:37565"/>
        <dbReference type="ChEBI" id="CHEBI:43474"/>
        <dbReference type="ChEBI" id="CHEBI:58189"/>
        <dbReference type="EC" id="3.6.5.3"/>
    </reaction>
    <physiologicalReaction direction="left-to-right" evidence="2">
        <dbReference type="Rhea" id="RHEA:19670"/>
    </physiologicalReaction>
</comment>
<comment type="subunit">
    <text evidence="2">Monomer.</text>
</comment>
<comment type="subcellular location">
    <subcellularLocation>
        <location evidence="2">Cytoplasm</location>
    </subcellularLocation>
</comment>
<comment type="similarity">
    <text evidence="2">Belongs to the TRAFAC class translation factor GTPase superfamily. Classic translation factor GTPase family. EF-Tu/EF-1A subfamily.</text>
</comment>
<organism>
    <name type="scientific">Caldicellulosiruptor bescii (strain ATCC BAA-1888 / DSM 6725 / KCTC 15123 / Z-1320)</name>
    <name type="common">Anaerocellum thermophilum</name>
    <dbReference type="NCBI Taxonomy" id="521460"/>
    <lineage>
        <taxon>Bacteria</taxon>
        <taxon>Bacillati</taxon>
        <taxon>Bacillota</taxon>
        <taxon>Bacillota incertae sedis</taxon>
        <taxon>Caldicellulosiruptorales</taxon>
        <taxon>Caldicellulosiruptoraceae</taxon>
        <taxon>Caldicellulosiruptor</taxon>
    </lineage>
</organism>
<dbReference type="EC" id="3.6.5.3" evidence="2"/>
<dbReference type="EMBL" id="CP001393">
    <property type="protein sequence ID" value="ACM59925.1"/>
    <property type="molecule type" value="Genomic_DNA"/>
</dbReference>
<dbReference type="RefSeq" id="WP_013403741.1">
    <property type="nucleotide sequence ID" value="NC_012034.1"/>
</dbReference>
<dbReference type="SMR" id="B9MQH1"/>
<dbReference type="STRING" id="521460.Athe_0810"/>
<dbReference type="GeneID" id="31772165"/>
<dbReference type="KEGG" id="ate:Athe_0810"/>
<dbReference type="eggNOG" id="COG0050">
    <property type="taxonomic scope" value="Bacteria"/>
</dbReference>
<dbReference type="HOGENOM" id="CLU_007265_0_1_9"/>
<dbReference type="Proteomes" id="UP000007723">
    <property type="component" value="Chromosome"/>
</dbReference>
<dbReference type="GO" id="GO:0005829">
    <property type="term" value="C:cytosol"/>
    <property type="evidence" value="ECO:0007669"/>
    <property type="project" value="TreeGrafter"/>
</dbReference>
<dbReference type="GO" id="GO:0005525">
    <property type="term" value="F:GTP binding"/>
    <property type="evidence" value="ECO:0007669"/>
    <property type="project" value="UniProtKB-UniRule"/>
</dbReference>
<dbReference type="GO" id="GO:0003924">
    <property type="term" value="F:GTPase activity"/>
    <property type="evidence" value="ECO:0007669"/>
    <property type="project" value="InterPro"/>
</dbReference>
<dbReference type="GO" id="GO:0003746">
    <property type="term" value="F:translation elongation factor activity"/>
    <property type="evidence" value="ECO:0007669"/>
    <property type="project" value="UniProtKB-UniRule"/>
</dbReference>
<dbReference type="CDD" id="cd01884">
    <property type="entry name" value="EF_Tu"/>
    <property type="match status" value="1"/>
</dbReference>
<dbReference type="CDD" id="cd03697">
    <property type="entry name" value="EFTU_II"/>
    <property type="match status" value="1"/>
</dbReference>
<dbReference type="CDD" id="cd03707">
    <property type="entry name" value="EFTU_III"/>
    <property type="match status" value="1"/>
</dbReference>
<dbReference type="FunFam" id="2.40.30.10:FF:000002">
    <property type="entry name" value="Elongation factor Tu"/>
    <property type="match status" value="1"/>
</dbReference>
<dbReference type="FunFam" id="3.40.50.300:FF:000003">
    <property type="entry name" value="Elongation factor Tu"/>
    <property type="match status" value="1"/>
</dbReference>
<dbReference type="FunFam" id="2.40.30.10:FF:000020">
    <property type="entry name" value="Translation elongation factor EF-1"/>
    <property type="match status" value="1"/>
</dbReference>
<dbReference type="Gene3D" id="3.40.50.300">
    <property type="entry name" value="P-loop containing nucleotide triphosphate hydrolases"/>
    <property type="match status" value="1"/>
</dbReference>
<dbReference type="Gene3D" id="2.40.30.10">
    <property type="entry name" value="Translation factors"/>
    <property type="match status" value="2"/>
</dbReference>
<dbReference type="HAMAP" id="MF_00118_B">
    <property type="entry name" value="EF_Tu_B"/>
    <property type="match status" value="1"/>
</dbReference>
<dbReference type="InterPro" id="IPR041709">
    <property type="entry name" value="EF-Tu_GTP-bd"/>
</dbReference>
<dbReference type="InterPro" id="IPR050055">
    <property type="entry name" value="EF-Tu_GTPase"/>
</dbReference>
<dbReference type="InterPro" id="IPR004161">
    <property type="entry name" value="EFTu-like_2"/>
</dbReference>
<dbReference type="InterPro" id="IPR033720">
    <property type="entry name" value="EFTU_2"/>
</dbReference>
<dbReference type="InterPro" id="IPR031157">
    <property type="entry name" value="G_TR_CS"/>
</dbReference>
<dbReference type="InterPro" id="IPR027417">
    <property type="entry name" value="P-loop_NTPase"/>
</dbReference>
<dbReference type="InterPro" id="IPR005225">
    <property type="entry name" value="Small_GTP-bd"/>
</dbReference>
<dbReference type="InterPro" id="IPR000795">
    <property type="entry name" value="T_Tr_GTP-bd_dom"/>
</dbReference>
<dbReference type="InterPro" id="IPR009000">
    <property type="entry name" value="Transl_B-barrel_sf"/>
</dbReference>
<dbReference type="InterPro" id="IPR009001">
    <property type="entry name" value="Transl_elong_EF1A/Init_IF2_C"/>
</dbReference>
<dbReference type="InterPro" id="IPR004541">
    <property type="entry name" value="Transl_elong_EFTu/EF1A_bac/org"/>
</dbReference>
<dbReference type="InterPro" id="IPR004160">
    <property type="entry name" value="Transl_elong_EFTu/EF1A_C"/>
</dbReference>
<dbReference type="NCBIfam" id="TIGR00485">
    <property type="entry name" value="EF-Tu"/>
    <property type="match status" value="1"/>
</dbReference>
<dbReference type="NCBIfam" id="NF000766">
    <property type="entry name" value="PRK00049.1"/>
    <property type="match status" value="1"/>
</dbReference>
<dbReference type="NCBIfam" id="NF009372">
    <property type="entry name" value="PRK12735.1"/>
    <property type="match status" value="1"/>
</dbReference>
<dbReference type="NCBIfam" id="NF009373">
    <property type="entry name" value="PRK12736.1"/>
    <property type="match status" value="1"/>
</dbReference>
<dbReference type="NCBIfam" id="TIGR00231">
    <property type="entry name" value="small_GTP"/>
    <property type="match status" value="1"/>
</dbReference>
<dbReference type="PANTHER" id="PTHR43721:SF22">
    <property type="entry name" value="ELONGATION FACTOR TU, MITOCHONDRIAL"/>
    <property type="match status" value="1"/>
</dbReference>
<dbReference type="PANTHER" id="PTHR43721">
    <property type="entry name" value="ELONGATION FACTOR TU-RELATED"/>
    <property type="match status" value="1"/>
</dbReference>
<dbReference type="Pfam" id="PF00009">
    <property type="entry name" value="GTP_EFTU"/>
    <property type="match status" value="1"/>
</dbReference>
<dbReference type="Pfam" id="PF03144">
    <property type="entry name" value="GTP_EFTU_D2"/>
    <property type="match status" value="1"/>
</dbReference>
<dbReference type="Pfam" id="PF03143">
    <property type="entry name" value="GTP_EFTU_D3"/>
    <property type="match status" value="1"/>
</dbReference>
<dbReference type="PRINTS" id="PR00315">
    <property type="entry name" value="ELONGATNFCT"/>
</dbReference>
<dbReference type="SUPFAM" id="SSF50465">
    <property type="entry name" value="EF-Tu/eEF-1alpha/eIF2-gamma C-terminal domain"/>
    <property type="match status" value="1"/>
</dbReference>
<dbReference type="SUPFAM" id="SSF52540">
    <property type="entry name" value="P-loop containing nucleoside triphosphate hydrolases"/>
    <property type="match status" value="1"/>
</dbReference>
<dbReference type="SUPFAM" id="SSF50447">
    <property type="entry name" value="Translation proteins"/>
    <property type="match status" value="1"/>
</dbReference>
<dbReference type="PROSITE" id="PS00301">
    <property type="entry name" value="G_TR_1"/>
    <property type="match status" value="1"/>
</dbReference>
<dbReference type="PROSITE" id="PS51722">
    <property type="entry name" value="G_TR_2"/>
    <property type="match status" value="1"/>
</dbReference>
<sequence>MAKAKFERTKPHVNIGTIGHVDHGKTTLTAAITKVLALKGKAQFMAYDQIDKAPEERERGITINTAHVEYETDARHYAHVDCPGHADYVKNMITGAAQMDGAILVVSAADGPMPQTREHILLARQVNVPYIVVFLNKVDMVDDPELIELVEMEVRELLSKYGYPGDEVPIVKGSALKALESTSQDPNAPEYQCILELMDAVDKYIPTPQRDIDKPFLMPIEDVFSITGRGTVVTGRVERGTLKTGEEVEIVGFAPEPRKTVVTGIEMFRKVLDEAVAGDNVGCLLRGIQKNEVERGQVLAKPGTIKPHTKFKAQVYVLTKEEGGRHTPFFNGYRPQFYFRTTDVTGTITLPEGVEMCMPGDNVEMTVELISPIAIESGLRFAIREGGRTVGAGSVTTIIE</sequence>
<keyword id="KW-0963">Cytoplasm</keyword>
<keyword id="KW-0251">Elongation factor</keyword>
<keyword id="KW-0342">GTP-binding</keyword>
<keyword id="KW-0378">Hydrolase</keyword>
<keyword id="KW-0460">Magnesium</keyword>
<keyword id="KW-0479">Metal-binding</keyword>
<keyword id="KW-0547">Nucleotide-binding</keyword>
<keyword id="KW-0648">Protein biosynthesis</keyword>